<accession>Q8LPG1</accession>
<accession>B3LFC0</accession>
<accession>Q3ED26</accession>
<accession>Q9C880</accession>
<comment type="function">
    <text evidence="1">May be involved in free fatty acids export from the plastids.</text>
</comment>
<comment type="subcellular location">
    <subcellularLocation>
        <location evidence="4">Plastid</location>
        <location evidence="4">Chloroplast membrane</location>
        <topology evidence="4">Multi-pass membrane protein</topology>
    </subcellularLocation>
</comment>
<comment type="miscellaneous">
    <text evidence="5">For all TMEM14 proteins, 4 hydrophobic alpha-helical domains are predicted. However, NMR structure determination of the human TMEM14A showed that only 3 of these helices are membrane-spaning while the amphiphilic N-terminal helix is probably located at the lipid micelle-water interface.</text>
</comment>
<comment type="similarity">
    <text evidence="4">Belongs to the TMEM14 family.</text>
</comment>
<comment type="sequence caution" evidence="4">
    <conflict type="erroneous gene model prediction">
        <sequence resource="EMBL-CDS" id="AAG51288"/>
    </conflict>
    <text>The predicted gene At1g33260 has been split into 2 genes: At1g33260 and At1g33265.</text>
</comment>
<gene>
    <name evidence="3" type="primary">FAX4</name>
    <name evidence="6" type="ordered locus">At1g33265</name>
    <name evidence="7" type="ORF">T16O9.6</name>
</gene>
<evidence type="ECO:0000250" key="1">
    <source>
        <dbReference type="UniProtKB" id="Q93V66"/>
    </source>
</evidence>
<evidence type="ECO:0000255" key="2"/>
<evidence type="ECO:0000303" key="3">
    <source>
    </source>
</evidence>
<evidence type="ECO:0000305" key="4"/>
<evidence type="ECO:0000305" key="5">
    <source>
    </source>
</evidence>
<evidence type="ECO:0000312" key="6">
    <source>
        <dbReference type="Araport" id="AT1G33265"/>
    </source>
</evidence>
<evidence type="ECO:0000312" key="7">
    <source>
        <dbReference type="EMBL" id="AAG51288.1"/>
    </source>
</evidence>
<evidence type="ECO:0000312" key="8">
    <source>
        <dbReference type="EMBL" id="AAM20721.1"/>
    </source>
</evidence>
<dbReference type="EMBL" id="AC027035">
    <property type="protein sequence ID" value="AAG51288.1"/>
    <property type="status" value="ALT_SEQ"/>
    <property type="molecule type" value="Genomic_DNA"/>
</dbReference>
<dbReference type="EMBL" id="CP002684">
    <property type="protein sequence ID" value="AEE31577.1"/>
    <property type="molecule type" value="Genomic_DNA"/>
</dbReference>
<dbReference type="EMBL" id="AY099870">
    <property type="protein sequence ID" value="AAM20721.1"/>
    <property type="molecule type" value="mRNA"/>
</dbReference>
<dbReference type="EMBL" id="BT000332">
    <property type="protein sequence ID" value="AAN15651.1"/>
    <property type="molecule type" value="mRNA"/>
</dbReference>
<dbReference type="RefSeq" id="NP_564422.1">
    <property type="nucleotide sequence ID" value="NM_103055.4"/>
</dbReference>
<dbReference type="FunCoup" id="Q8LPG1">
    <property type="interactions" value="3"/>
</dbReference>
<dbReference type="STRING" id="3702.Q8LPG1"/>
<dbReference type="PaxDb" id="3702-AT1G33265.1"/>
<dbReference type="EnsemblPlants" id="AT1G33265.1">
    <property type="protein sequence ID" value="AT1G33265.1"/>
    <property type="gene ID" value="AT1G33265"/>
</dbReference>
<dbReference type="GeneID" id="840221"/>
<dbReference type="Gramene" id="AT1G33265.1">
    <property type="protein sequence ID" value="AT1G33265.1"/>
    <property type="gene ID" value="AT1G33265"/>
</dbReference>
<dbReference type="KEGG" id="ath:AT1G33265"/>
<dbReference type="Araport" id="AT1G33265"/>
<dbReference type="TAIR" id="AT1G33265">
    <property type="gene designation" value="FAX4"/>
</dbReference>
<dbReference type="eggNOG" id="KOG1187">
    <property type="taxonomic scope" value="Eukaryota"/>
</dbReference>
<dbReference type="HOGENOM" id="CLU_130145_0_0_1"/>
<dbReference type="InParanoid" id="Q8LPG1"/>
<dbReference type="OMA" id="GTAYYLM"/>
<dbReference type="OrthoDB" id="5620at2759"/>
<dbReference type="PRO" id="PR:Q8LPG1"/>
<dbReference type="Proteomes" id="UP000006548">
    <property type="component" value="Chromosome 1"/>
</dbReference>
<dbReference type="ExpressionAtlas" id="Q8LPG1">
    <property type="expression patterns" value="baseline and differential"/>
</dbReference>
<dbReference type="GO" id="GO:0031969">
    <property type="term" value="C:chloroplast membrane"/>
    <property type="evidence" value="ECO:0000314"/>
    <property type="project" value="TAIR"/>
</dbReference>
<dbReference type="GO" id="GO:0009793">
    <property type="term" value="P:embryo development ending in seed dormancy"/>
    <property type="evidence" value="ECO:0000316"/>
    <property type="project" value="TAIR"/>
</dbReference>
<dbReference type="GO" id="GO:1905885">
    <property type="term" value="P:positive regulation of triglyceride transport"/>
    <property type="evidence" value="ECO:0000315"/>
    <property type="project" value="TAIR"/>
</dbReference>
<dbReference type="Gene3D" id="1.10.10.1740">
    <property type="entry name" value="Transmembrane protein 14-like"/>
    <property type="match status" value="1"/>
</dbReference>
<dbReference type="InterPro" id="IPR005349">
    <property type="entry name" value="TMEM14"/>
</dbReference>
<dbReference type="InterPro" id="IPR044890">
    <property type="entry name" value="TMEM14_sf"/>
</dbReference>
<dbReference type="PANTHER" id="PTHR12668:SF38">
    <property type="entry name" value="PROTEIN FATTY ACID EXPORT 4, CHLOROPLASTIC"/>
    <property type="match status" value="1"/>
</dbReference>
<dbReference type="PANTHER" id="PTHR12668">
    <property type="entry name" value="TRANSMEMBRANE PROTEIN 14, 15"/>
    <property type="match status" value="1"/>
</dbReference>
<dbReference type="Pfam" id="PF03647">
    <property type="entry name" value="Tmemb_14"/>
    <property type="match status" value="1"/>
</dbReference>
<sequence>MWSLALTLPSPSLVSVRSTKLGRSVSNGGRNWSGLTKLSEKSKTKRGNGLCCKAELSELAPVVSATYGVLLLGGGLFAYSKSGSKGSLFGGLTGSVLMASAYFLTKSPETRVLGDTIGLGAAFLFSSVFGFRLASSRKPVPAGPLLLLSIGMLSFFVMAYMHDSLPAISIPDPLPLP</sequence>
<keyword id="KW-0150">Chloroplast</keyword>
<keyword id="KW-0472">Membrane</keyword>
<keyword id="KW-0934">Plastid</keyword>
<keyword id="KW-1185">Reference proteome</keyword>
<keyword id="KW-0809">Transit peptide</keyword>
<keyword id="KW-0812">Transmembrane</keyword>
<keyword id="KW-1133">Transmembrane helix</keyword>
<organism evidence="8">
    <name type="scientific">Arabidopsis thaliana</name>
    <name type="common">Mouse-ear cress</name>
    <dbReference type="NCBI Taxonomy" id="3702"/>
    <lineage>
        <taxon>Eukaryota</taxon>
        <taxon>Viridiplantae</taxon>
        <taxon>Streptophyta</taxon>
        <taxon>Embryophyta</taxon>
        <taxon>Tracheophyta</taxon>
        <taxon>Spermatophyta</taxon>
        <taxon>Magnoliopsida</taxon>
        <taxon>eudicotyledons</taxon>
        <taxon>Gunneridae</taxon>
        <taxon>Pentapetalae</taxon>
        <taxon>rosids</taxon>
        <taxon>malvids</taxon>
        <taxon>Brassicales</taxon>
        <taxon>Brassicaceae</taxon>
        <taxon>Camelineae</taxon>
        <taxon>Arabidopsis</taxon>
    </lineage>
</organism>
<proteinExistence type="evidence at transcript level"/>
<reference key="1">
    <citation type="journal article" date="2000" name="Nature">
        <title>Sequence and analysis of chromosome 1 of the plant Arabidopsis thaliana.</title>
        <authorList>
            <person name="Theologis A."/>
            <person name="Ecker J.R."/>
            <person name="Palm C.J."/>
            <person name="Federspiel N.A."/>
            <person name="Kaul S."/>
            <person name="White O."/>
            <person name="Alonso J."/>
            <person name="Altafi H."/>
            <person name="Araujo R."/>
            <person name="Bowman C.L."/>
            <person name="Brooks S.Y."/>
            <person name="Buehler E."/>
            <person name="Chan A."/>
            <person name="Chao Q."/>
            <person name="Chen H."/>
            <person name="Cheuk R.F."/>
            <person name="Chin C.W."/>
            <person name="Chung M.K."/>
            <person name="Conn L."/>
            <person name="Conway A.B."/>
            <person name="Conway A.R."/>
            <person name="Creasy T.H."/>
            <person name="Dewar K."/>
            <person name="Dunn P."/>
            <person name="Etgu P."/>
            <person name="Feldblyum T.V."/>
            <person name="Feng J.-D."/>
            <person name="Fong B."/>
            <person name="Fujii C.Y."/>
            <person name="Gill J.E."/>
            <person name="Goldsmith A.D."/>
            <person name="Haas B."/>
            <person name="Hansen N.F."/>
            <person name="Hughes B."/>
            <person name="Huizar L."/>
            <person name="Hunter J.L."/>
            <person name="Jenkins J."/>
            <person name="Johnson-Hopson C."/>
            <person name="Khan S."/>
            <person name="Khaykin E."/>
            <person name="Kim C.J."/>
            <person name="Koo H.L."/>
            <person name="Kremenetskaia I."/>
            <person name="Kurtz D.B."/>
            <person name="Kwan A."/>
            <person name="Lam B."/>
            <person name="Langin-Hooper S."/>
            <person name="Lee A."/>
            <person name="Lee J.M."/>
            <person name="Lenz C.A."/>
            <person name="Li J.H."/>
            <person name="Li Y.-P."/>
            <person name="Lin X."/>
            <person name="Liu S.X."/>
            <person name="Liu Z.A."/>
            <person name="Luros J.S."/>
            <person name="Maiti R."/>
            <person name="Marziali A."/>
            <person name="Militscher J."/>
            <person name="Miranda M."/>
            <person name="Nguyen M."/>
            <person name="Nierman W.C."/>
            <person name="Osborne B.I."/>
            <person name="Pai G."/>
            <person name="Peterson J."/>
            <person name="Pham P.K."/>
            <person name="Rizzo M."/>
            <person name="Rooney T."/>
            <person name="Rowley D."/>
            <person name="Sakano H."/>
            <person name="Salzberg S.L."/>
            <person name="Schwartz J.R."/>
            <person name="Shinn P."/>
            <person name="Southwick A.M."/>
            <person name="Sun H."/>
            <person name="Tallon L.J."/>
            <person name="Tambunga G."/>
            <person name="Toriumi M.J."/>
            <person name="Town C.D."/>
            <person name="Utterback T."/>
            <person name="Van Aken S."/>
            <person name="Vaysberg M."/>
            <person name="Vysotskaia V.S."/>
            <person name="Walker M."/>
            <person name="Wu D."/>
            <person name="Yu G."/>
            <person name="Fraser C.M."/>
            <person name="Venter J.C."/>
            <person name="Davis R.W."/>
        </authorList>
    </citation>
    <scope>NUCLEOTIDE SEQUENCE [LARGE SCALE GENOMIC DNA]</scope>
    <source>
        <strain>cv. Columbia</strain>
    </source>
</reference>
<reference key="2">
    <citation type="journal article" date="2017" name="Plant J.">
        <title>Araport11: a complete reannotation of the Arabidopsis thaliana reference genome.</title>
        <authorList>
            <person name="Cheng C.Y."/>
            <person name="Krishnakumar V."/>
            <person name="Chan A.P."/>
            <person name="Thibaud-Nissen F."/>
            <person name="Schobel S."/>
            <person name="Town C.D."/>
        </authorList>
    </citation>
    <scope>GENOME REANNOTATION</scope>
    <source>
        <strain>cv. Columbia</strain>
    </source>
</reference>
<reference key="3">
    <citation type="journal article" date="2003" name="Science">
        <title>Empirical analysis of transcriptional activity in the Arabidopsis genome.</title>
        <authorList>
            <person name="Yamada K."/>
            <person name="Lim J."/>
            <person name="Dale J.M."/>
            <person name="Chen H."/>
            <person name="Shinn P."/>
            <person name="Palm C.J."/>
            <person name="Southwick A.M."/>
            <person name="Wu H.C."/>
            <person name="Kim C.J."/>
            <person name="Nguyen M."/>
            <person name="Pham P.K."/>
            <person name="Cheuk R.F."/>
            <person name="Karlin-Newmann G."/>
            <person name="Liu S.X."/>
            <person name="Lam B."/>
            <person name="Sakano H."/>
            <person name="Wu T."/>
            <person name="Yu G."/>
            <person name="Miranda M."/>
            <person name="Quach H.L."/>
            <person name="Tripp M."/>
            <person name="Chang C.H."/>
            <person name="Lee J.M."/>
            <person name="Toriumi M.J."/>
            <person name="Chan M.M."/>
            <person name="Tang C.C."/>
            <person name="Onodera C.S."/>
            <person name="Deng J.M."/>
            <person name="Akiyama K."/>
            <person name="Ansari Y."/>
            <person name="Arakawa T."/>
            <person name="Banh J."/>
            <person name="Banno F."/>
            <person name="Bowser L."/>
            <person name="Brooks S.Y."/>
            <person name="Carninci P."/>
            <person name="Chao Q."/>
            <person name="Choy N."/>
            <person name="Enju A."/>
            <person name="Goldsmith A.D."/>
            <person name="Gurjal M."/>
            <person name="Hansen N.F."/>
            <person name="Hayashizaki Y."/>
            <person name="Johnson-Hopson C."/>
            <person name="Hsuan V.W."/>
            <person name="Iida K."/>
            <person name="Karnes M."/>
            <person name="Khan S."/>
            <person name="Koesema E."/>
            <person name="Ishida J."/>
            <person name="Jiang P.X."/>
            <person name="Jones T."/>
            <person name="Kawai J."/>
            <person name="Kamiya A."/>
            <person name="Meyers C."/>
            <person name="Nakajima M."/>
            <person name="Narusaka M."/>
            <person name="Seki M."/>
            <person name="Sakurai T."/>
            <person name="Satou M."/>
            <person name="Tamse R."/>
            <person name="Vaysberg M."/>
            <person name="Wallender E.K."/>
            <person name="Wong C."/>
            <person name="Yamamura Y."/>
            <person name="Yuan S."/>
            <person name="Shinozaki K."/>
            <person name="Davis R.W."/>
            <person name="Theologis A."/>
            <person name="Ecker J.R."/>
        </authorList>
    </citation>
    <scope>NUCLEOTIDE SEQUENCE [LARGE SCALE MRNA]</scope>
    <source>
        <strain>cv. Columbia</strain>
    </source>
</reference>
<reference key="4">
    <citation type="journal article" date="2015" name="PLoS Biol.">
        <title>FAX1, a novel membrane protein mediating plastid fatty acid export.</title>
        <authorList>
            <person name="Li N."/>
            <person name="Guegel I.L."/>
            <person name="Giavalisco P."/>
            <person name="Zeisler V."/>
            <person name="Schreiber L."/>
            <person name="Soll J."/>
            <person name="Philippar K."/>
        </authorList>
    </citation>
    <scope>GENE FAMILY</scope>
    <scope>NOMENCLATURE</scope>
</reference>
<protein>
    <recommendedName>
        <fullName evidence="3">Protein FATTY ACID EXPORT 4, chloroplastic</fullName>
        <shortName evidence="3">At-FAX4</shortName>
    </recommendedName>
</protein>
<feature type="transit peptide" description="Chloroplast" evidence="2">
    <location>
        <begin position="1"/>
        <end position="63"/>
    </location>
</feature>
<feature type="chain" id="PRO_0000432804" description="Protein FATTY ACID EXPORT 4, chloroplastic" evidence="2">
    <location>
        <begin position="64"/>
        <end position="177"/>
    </location>
</feature>
<feature type="transmembrane region" description="Helical; Name=1" evidence="2">
    <location>
        <begin position="85"/>
        <end position="105"/>
    </location>
</feature>
<feature type="transmembrane region" description="Helical; Name=2" evidence="2">
    <location>
        <begin position="111"/>
        <end position="131"/>
    </location>
</feature>
<feature type="transmembrane region" description="Helical; Name=3" evidence="2">
    <location>
        <begin position="140"/>
        <end position="160"/>
    </location>
</feature>
<name>FAX4_ARATH</name>